<organism>
    <name type="scientific">Aspergillus flavus (strain ATCC 200026 / FGSC A1120 / IAM 13836 / NRRL 3357 / JCM 12722 / SRRC 167)</name>
    <dbReference type="NCBI Taxonomy" id="332952"/>
    <lineage>
        <taxon>Eukaryota</taxon>
        <taxon>Fungi</taxon>
        <taxon>Dikarya</taxon>
        <taxon>Ascomycota</taxon>
        <taxon>Pezizomycotina</taxon>
        <taxon>Eurotiomycetes</taxon>
        <taxon>Eurotiomycetidae</taxon>
        <taxon>Eurotiales</taxon>
        <taxon>Aspergillaceae</taxon>
        <taxon>Aspergillus</taxon>
        <taxon>Aspergillus subgen. Circumdati</taxon>
    </lineage>
</organism>
<proteinExistence type="evidence at transcript level"/>
<keyword id="KW-0325">Glycoprotein</keyword>
<keyword id="KW-0349">Heme</keyword>
<keyword id="KW-0408">Iron</keyword>
<keyword id="KW-0472">Membrane</keyword>
<keyword id="KW-0479">Metal-binding</keyword>
<keyword id="KW-0503">Monooxygenase</keyword>
<keyword id="KW-0560">Oxidoreductase</keyword>
<keyword id="KW-0812">Transmembrane</keyword>
<keyword id="KW-1133">Transmembrane helix</keyword>
<sequence length="524" mass="58898">MIGEQYTSIITGFKSALAVSCIAVSLFLLSPWIAYARLPSSIKSPIKAKGPLSALRACLNEISAGAKTSTRGYELYSKKGQSFAMLNINFRPQVILPPEHVRWLVTQPEDILSHAKASDDADALGYIWPLFDASALHSFSKVLQIDLTRNVTQTEKDVLEEVQHIMDELVGQTESWKEVNMVQAFERIMYQATQRVYVGLPLCRDSTYMGYVKGYARSLGTAMVFAAQLTPWPLRQVTALLAGLPVYYYVLRVRSYLSPLFKERMERLKEKGGTQDDNLEGEPRNLITWMSDGVLSGVGPKSISPSEMVTWLGILALLPTDNLWTTCTNVLLDLLSSESEHAYLHTIREEARTVFASSKESGKPVSHGLHHIDSAIRESLRMNSLSPRSLHRQVVRRGGVVLPDGQKVPTGTWLCVLSGNIQRDEDYYEDAQTYKPFRFVPKLTEAGGDKAPLLPLTNEKYLTFGYGRHACPGRWFSFQVMKIVIAYILANYDIQPLEKRPDNIVFADLNIPHLSHIIRIKRMT</sequence>
<accession>B8NU01</accession>
<name>LNAC_ASPFN</name>
<protein>
    <recommendedName>
        <fullName evidence="5">Cytochrome P450 monooxygenase lnaC</fullName>
        <ecNumber evidence="7">1.-.-.-</ecNumber>
    </recommendedName>
    <alternativeName>
        <fullName evidence="5">Lna diastereomeric piperazines biosynthesis cluster protein C</fullName>
    </alternativeName>
</protein>
<comment type="function">
    <text evidence="4">Cytochrome P450 monooxygenase; part of the lna gene cluster that mediates the biosynthesis of diastereomeric piperazines. Lna and lnb clusters encode sets of enzymes that produce overlapping sets of previously undescribed metabolites such as piperazinomycin-like metabolites or morpholine (PubMed:23281040). The lna and lnb biosynthetic pathways appear to be part of a signaling network that controls the formation of sclerotia, a resilient overwintering structure (PubMed:23281040). One primary function of the non-canonical nonribosomal peptide synthetases lnaA and lnbA consists in the reduction of L-tyrosine (PubMed:23281040). The presence in the clusters of tailoring enzymes such as the oxidoreductases lnaB, lnbB, lnaE or lnbE, as well as of the cytochrome P450 monooxygenases lnaC, lnaD, or lnbC, might explain formation of various diastereomeric piperazines (PubMed:23281040).</text>
</comment>
<comment type="cofactor">
    <cofactor evidence="1">
        <name>heme</name>
        <dbReference type="ChEBI" id="CHEBI:30413"/>
    </cofactor>
</comment>
<comment type="pathway">
    <text evidence="7">Secondary metabolite biosynthesis.</text>
</comment>
<comment type="subcellular location">
    <subcellularLocation>
        <location evidence="2">Membrane</location>
        <topology evidence="2">Single-pass membrane protein</topology>
    </subcellularLocation>
</comment>
<comment type="induction">
    <text evidence="4">Expression is regulated by a complex signaling network which may include cross-pathway interactions mediated by sensing of the cluster final products or shared biosynthetic intermediates.</text>
</comment>
<comment type="similarity">
    <text evidence="6">Belongs to the cytochrome P450 family.</text>
</comment>
<reference key="1">
    <citation type="journal article" date="2015" name="Genome Announc.">
        <title>Genome sequence of Aspergillus flavus NRRL 3357, a strain that causes aflatoxin contamination of food and feed.</title>
        <authorList>
            <person name="Nierman W.C."/>
            <person name="Yu J."/>
            <person name="Fedorova-Abrams N.D."/>
            <person name="Losada L."/>
            <person name="Cleveland T.E."/>
            <person name="Bhatnagar D."/>
            <person name="Bennett J.W."/>
            <person name="Dean R."/>
            <person name="Payne G.A."/>
        </authorList>
    </citation>
    <scope>NUCLEOTIDE SEQUENCE [LARGE SCALE GENOMIC DNA]</scope>
    <source>
        <strain>ATCC 200026 / FGSC A1120 / IAM 13836 / NRRL 3357 / JCM 12722 / SRRC 167</strain>
    </source>
</reference>
<reference key="2">
    <citation type="journal article" date="2013" name="Angew. Chem. Int. Ed.">
        <title>Homologous NRPS-like gene clusters mediate redundant small-molecule biosynthesis in Aspergillus flavus.</title>
        <authorList>
            <person name="Forseth R.R."/>
            <person name="Amaike S."/>
            <person name="Schwenk D."/>
            <person name="Affeldt K.J."/>
            <person name="Hoffmeister D."/>
            <person name="Schroeder F.C."/>
            <person name="Keller N.P."/>
        </authorList>
    </citation>
    <scope>IDENTIFICATION</scope>
    <scope>FUNCTION</scope>
    <scope>INDUCTION</scope>
    <scope>PATHWAY</scope>
</reference>
<dbReference type="EC" id="1.-.-.-" evidence="7"/>
<dbReference type="EMBL" id="EQ963484">
    <property type="protein sequence ID" value="EED46508.1"/>
    <property type="molecule type" value="Genomic_DNA"/>
</dbReference>
<dbReference type="RefSeq" id="XP_002384044.1">
    <property type="nucleotide sequence ID" value="XM_002384003.1"/>
</dbReference>
<dbReference type="SMR" id="B8NU01"/>
<dbReference type="STRING" id="332952.B8NU01"/>
<dbReference type="GlyCosmos" id="B8NU01">
    <property type="glycosylation" value="1 site, No reported glycans"/>
</dbReference>
<dbReference type="EnsemblFungi" id="EED46508">
    <property type="protein sequence ID" value="EED46508"/>
    <property type="gene ID" value="AFLA_101720"/>
</dbReference>
<dbReference type="VEuPathDB" id="FungiDB:AFLA_010422"/>
<dbReference type="eggNOG" id="KOG0156">
    <property type="taxonomic scope" value="Eukaryota"/>
</dbReference>
<dbReference type="HOGENOM" id="CLU_022195_9_2_1"/>
<dbReference type="OMA" id="AMLNINF"/>
<dbReference type="GO" id="GO:0016020">
    <property type="term" value="C:membrane"/>
    <property type="evidence" value="ECO:0007669"/>
    <property type="project" value="UniProtKB-SubCell"/>
</dbReference>
<dbReference type="GO" id="GO:0020037">
    <property type="term" value="F:heme binding"/>
    <property type="evidence" value="ECO:0007669"/>
    <property type="project" value="InterPro"/>
</dbReference>
<dbReference type="GO" id="GO:0005506">
    <property type="term" value="F:iron ion binding"/>
    <property type="evidence" value="ECO:0007669"/>
    <property type="project" value="InterPro"/>
</dbReference>
<dbReference type="GO" id="GO:0004497">
    <property type="term" value="F:monooxygenase activity"/>
    <property type="evidence" value="ECO:0007669"/>
    <property type="project" value="UniProtKB-KW"/>
</dbReference>
<dbReference type="GO" id="GO:0016705">
    <property type="term" value="F:oxidoreductase activity, acting on paired donors, with incorporation or reduction of molecular oxygen"/>
    <property type="evidence" value="ECO:0007669"/>
    <property type="project" value="InterPro"/>
</dbReference>
<dbReference type="GO" id="GO:0019748">
    <property type="term" value="P:secondary metabolic process"/>
    <property type="evidence" value="ECO:0007669"/>
    <property type="project" value="UniProtKB-ARBA"/>
</dbReference>
<dbReference type="CDD" id="cd11041">
    <property type="entry name" value="CYP503A1-like"/>
    <property type="match status" value="1"/>
</dbReference>
<dbReference type="Gene3D" id="1.10.630.10">
    <property type="entry name" value="Cytochrome P450"/>
    <property type="match status" value="1"/>
</dbReference>
<dbReference type="InterPro" id="IPR001128">
    <property type="entry name" value="Cyt_P450"/>
</dbReference>
<dbReference type="InterPro" id="IPR017972">
    <property type="entry name" value="Cyt_P450_CS"/>
</dbReference>
<dbReference type="InterPro" id="IPR002403">
    <property type="entry name" value="Cyt_P450_E_grp-IV"/>
</dbReference>
<dbReference type="InterPro" id="IPR036396">
    <property type="entry name" value="Cyt_P450_sf"/>
</dbReference>
<dbReference type="PANTHER" id="PTHR46206">
    <property type="entry name" value="CYTOCHROME P450"/>
    <property type="match status" value="1"/>
</dbReference>
<dbReference type="PANTHER" id="PTHR46206:SF1">
    <property type="entry name" value="P450, PUTATIVE (EUROFUNG)-RELATED"/>
    <property type="match status" value="1"/>
</dbReference>
<dbReference type="Pfam" id="PF00067">
    <property type="entry name" value="p450"/>
    <property type="match status" value="1"/>
</dbReference>
<dbReference type="PRINTS" id="PR00465">
    <property type="entry name" value="EP450IV"/>
</dbReference>
<dbReference type="SUPFAM" id="SSF48264">
    <property type="entry name" value="Cytochrome P450"/>
    <property type="match status" value="1"/>
</dbReference>
<dbReference type="PROSITE" id="PS00086">
    <property type="entry name" value="CYTOCHROME_P450"/>
    <property type="match status" value="1"/>
</dbReference>
<evidence type="ECO:0000250" key="1">
    <source>
        <dbReference type="UniProtKB" id="P04798"/>
    </source>
</evidence>
<evidence type="ECO:0000255" key="2"/>
<evidence type="ECO:0000255" key="3">
    <source>
        <dbReference type="PROSITE-ProRule" id="PRU00498"/>
    </source>
</evidence>
<evidence type="ECO:0000269" key="4">
    <source>
    </source>
</evidence>
<evidence type="ECO:0000303" key="5">
    <source>
    </source>
</evidence>
<evidence type="ECO:0000305" key="6"/>
<evidence type="ECO:0000305" key="7">
    <source>
    </source>
</evidence>
<feature type="chain" id="PRO_0000446078" description="Cytochrome P450 monooxygenase lnaC">
    <location>
        <begin position="1"/>
        <end position="524"/>
    </location>
</feature>
<feature type="transmembrane region" description="Helical" evidence="2">
    <location>
        <begin position="16"/>
        <end position="36"/>
    </location>
</feature>
<feature type="binding site" description="axial binding residue" evidence="1">
    <location>
        <position position="471"/>
    </location>
    <ligand>
        <name>heme</name>
        <dbReference type="ChEBI" id="CHEBI:30413"/>
    </ligand>
    <ligandPart>
        <name>Fe</name>
        <dbReference type="ChEBI" id="CHEBI:18248"/>
    </ligandPart>
</feature>
<feature type="glycosylation site" description="N-linked (GlcNAc...) asparagine" evidence="3">
    <location>
        <position position="150"/>
    </location>
</feature>
<gene>
    <name evidence="5" type="primary">lnaC</name>
    <name type="ORF">AFLA_101720</name>
</gene>